<dbReference type="EMBL" id="U37424">
    <property type="protein sequence ID" value="AAA80355.1"/>
    <property type="status" value="ALT_SEQ"/>
    <property type="molecule type" value="Genomic_DNA"/>
</dbReference>
<dbReference type="EMBL" id="FO080198">
    <property type="protein sequence ID" value="CCD61911.1"/>
    <property type="molecule type" value="Genomic_DNA"/>
</dbReference>
<dbReference type="PIR" id="T34026">
    <property type="entry name" value="T34026"/>
</dbReference>
<dbReference type="RefSeq" id="NP_491689.4">
    <property type="nucleotide sequence ID" value="NM_059288.6"/>
</dbReference>
<dbReference type="SMR" id="Q10902"/>
<dbReference type="BioGRID" id="37706">
    <property type="interactions" value="19"/>
</dbReference>
<dbReference type="FunCoup" id="Q10902">
    <property type="interactions" value="1709"/>
</dbReference>
<dbReference type="IntAct" id="Q10902">
    <property type="interactions" value="14"/>
</dbReference>
<dbReference type="STRING" id="6239.C32F10.6.1"/>
<dbReference type="PaxDb" id="6239-C32F10.6"/>
<dbReference type="EnsemblMetazoa" id="C32F10.6.1">
    <property type="protein sequence ID" value="C32F10.6.1"/>
    <property type="gene ID" value="WBGene00003601"/>
</dbReference>
<dbReference type="GeneID" id="172251"/>
<dbReference type="KEGG" id="cel:CELE_C32F10.6"/>
<dbReference type="UCSC" id="C32F10.6">
    <property type="organism name" value="c. elegans"/>
</dbReference>
<dbReference type="AGR" id="WB:WBGene00003601"/>
<dbReference type="CTD" id="172251"/>
<dbReference type="WormBase" id="C32F10.6">
    <property type="protein sequence ID" value="CE39002"/>
    <property type="gene ID" value="WBGene00003601"/>
    <property type="gene designation" value="nhr-2"/>
</dbReference>
<dbReference type="eggNOG" id="KOG3575">
    <property type="taxonomic scope" value="Eukaryota"/>
</dbReference>
<dbReference type="GeneTree" id="ENSGT00940000171488"/>
<dbReference type="HOGENOM" id="CLU_552354_0_0_1"/>
<dbReference type="InParanoid" id="Q10902"/>
<dbReference type="OMA" id="YENCAMN"/>
<dbReference type="OrthoDB" id="6355676at2759"/>
<dbReference type="PhylomeDB" id="Q10902"/>
<dbReference type="Reactome" id="R-CEL-200425">
    <property type="pathway name" value="Carnitine shuttle"/>
</dbReference>
<dbReference type="Reactome" id="R-CEL-381340">
    <property type="pathway name" value="Transcriptional regulation of white adipocyte differentiation"/>
</dbReference>
<dbReference type="Reactome" id="R-CEL-383280">
    <property type="pathway name" value="Nuclear Receptor transcription pathway"/>
</dbReference>
<dbReference type="Reactome" id="R-CEL-400206">
    <property type="pathway name" value="Regulation of lipid metabolism by PPARalpha"/>
</dbReference>
<dbReference type="Reactome" id="R-CEL-4090294">
    <property type="pathway name" value="SUMOylation of intracellular receptors"/>
</dbReference>
<dbReference type="Reactome" id="R-CEL-5362517">
    <property type="pathway name" value="Signaling by Retinoic Acid"/>
</dbReference>
<dbReference type="Reactome" id="R-CEL-9616222">
    <property type="pathway name" value="Transcriptional regulation of granulopoiesis"/>
</dbReference>
<dbReference type="Reactome" id="R-CEL-9841922">
    <property type="pathway name" value="MLL4 and MLL3 complexes regulate expression of PPARG target genes in adipogenesis and hepatic steatosis"/>
</dbReference>
<dbReference type="SignaLink" id="Q10902"/>
<dbReference type="PRO" id="PR:Q10902"/>
<dbReference type="Proteomes" id="UP000001940">
    <property type="component" value="Chromosome I"/>
</dbReference>
<dbReference type="Bgee" id="WBGene00003601">
    <property type="expression patterns" value="Expressed in embryo and 4 other cell types or tissues"/>
</dbReference>
<dbReference type="GO" id="GO:0005634">
    <property type="term" value="C:nucleus"/>
    <property type="evidence" value="ECO:0000314"/>
    <property type="project" value="WormBase"/>
</dbReference>
<dbReference type="GO" id="GO:0004879">
    <property type="term" value="F:nuclear receptor activity"/>
    <property type="evidence" value="ECO:0000318"/>
    <property type="project" value="GO_Central"/>
</dbReference>
<dbReference type="GO" id="GO:0000978">
    <property type="term" value="F:RNA polymerase II cis-regulatory region sequence-specific DNA binding"/>
    <property type="evidence" value="ECO:0000318"/>
    <property type="project" value="GO_Central"/>
</dbReference>
<dbReference type="GO" id="GO:0008270">
    <property type="term" value="F:zinc ion binding"/>
    <property type="evidence" value="ECO:0007669"/>
    <property type="project" value="UniProtKB-KW"/>
</dbReference>
<dbReference type="GO" id="GO:0030154">
    <property type="term" value="P:cell differentiation"/>
    <property type="evidence" value="ECO:0000318"/>
    <property type="project" value="GO_Central"/>
</dbReference>
<dbReference type="GO" id="GO:0009755">
    <property type="term" value="P:hormone-mediated signaling pathway"/>
    <property type="evidence" value="ECO:0000318"/>
    <property type="project" value="GO_Central"/>
</dbReference>
<dbReference type="GO" id="GO:0030522">
    <property type="term" value="P:intracellular receptor signaling pathway"/>
    <property type="evidence" value="ECO:0000318"/>
    <property type="project" value="GO_Central"/>
</dbReference>
<dbReference type="GO" id="GO:0000122">
    <property type="term" value="P:negative regulation of transcription by RNA polymerase II"/>
    <property type="evidence" value="ECO:0000318"/>
    <property type="project" value="GO_Central"/>
</dbReference>
<dbReference type="GO" id="GO:0045944">
    <property type="term" value="P:positive regulation of transcription by RNA polymerase II"/>
    <property type="evidence" value="ECO:0000318"/>
    <property type="project" value="GO_Central"/>
</dbReference>
<dbReference type="CDD" id="cd06916">
    <property type="entry name" value="NR_DBD_like"/>
    <property type="match status" value="1"/>
</dbReference>
<dbReference type="FunFam" id="3.30.50.10:FF:000070">
    <property type="entry name" value="Nuclear hormone receptor family member nhr-2"/>
    <property type="match status" value="1"/>
</dbReference>
<dbReference type="Gene3D" id="3.30.50.10">
    <property type="entry name" value="Erythroid Transcription Factor GATA-1, subunit A"/>
    <property type="match status" value="1"/>
</dbReference>
<dbReference type="InterPro" id="IPR050234">
    <property type="entry name" value="Nuclear_hormone_rcpt_NR1"/>
</dbReference>
<dbReference type="InterPro" id="IPR001628">
    <property type="entry name" value="Znf_hrmn_rcpt"/>
</dbReference>
<dbReference type="InterPro" id="IPR013088">
    <property type="entry name" value="Znf_NHR/GATA"/>
</dbReference>
<dbReference type="PANTHER" id="PTHR24082:SF473">
    <property type="entry name" value="ECDYSONE-INDUCED PROTEIN 75B, ISOFORM B"/>
    <property type="match status" value="1"/>
</dbReference>
<dbReference type="PANTHER" id="PTHR24082">
    <property type="entry name" value="NUCLEAR HORMONE RECEPTOR"/>
    <property type="match status" value="1"/>
</dbReference>
<dbReference type="Pfam" id="PF00105">
    <property type="entry name" value="zf-C4"/>
    <property type="match status" value="1"/>
</dbReference>
<dbReference type="PRINTS" id="PR00047">
    <property type="entry name" value="STROIDFINGER"/>
</dbReference>
<dbReference type="SMART" id="SM00399">
    <property type="entry name" value="ZnF_C4"/>
    <property type="match status" value="1"/>
</dbReference>
<dbReference type="SUPFAM" id="SSF57716">
    <property type="entry name" value="Glucocorticoid receptor-like (DNA-binding domain)"/>
    <property type="match status" value="1"/>
</dbReference>
<dbReference type="PROSITE" id="PS00031">
    <property type="entry name" value="NUCLEAR_REC_DBD_1"/>
    <property type="match status" value="1"/>
</dbReference>
<dbReference type="PROSITE" id="PS51030">
    <property type="entry name" value="NUCLEAR_REC_DBD_2"/>
    <property type="match status" value="1"/>
</dbReference>
<gene>
    <name type="primary">nhr-2</name>
    <name type="ORF">C32F10.6</name>
</gene>
<proteinExistence type="inferred from homology"/>
<feature type="chain" id="PRO_0000053756" description="Nuclear hormone receptor family member nhr-2">
    <location>
        <begin position="1"/>
        <end position="472"/>
    </location>
</feature>
<feature type="DNA-binding region" description="Nuclear receptor" evidence="1">
    <location>
        <begin position="215"/>
        <end position="297"/>
    </location>
</feature>
<feature type="zinc finger region" description="NR C4-type" evidence="1">
    <location>
        <begin position="218"/>
        <end position="238"/>
    </location>
</feature>
<feature type="zinc finger region" description="NR C4-type" evidence="1">
    <location>
        <begin position="267"/>
        <end position="285"/>
    </location>
</feature>
<feature type="region of interest" description="Disordered" evidence="2">
    <location>
        <begin position="57"/>
        <end position="112"/>
    </location>
</feature>
<feature type="region of interest" description="Disordered" evidence="2">
    <location>
        <begin position="138"/>
        <end position="184"/>
    </location>
</feature>
<feature type="compositionally biased region" description="Polar residues" evidence="2">
    <location>
        <begin position="57"/>
        <end position="83"/>
    </location>
</feature>
<feature type="compositionally biased region" description="Polar residues" evidence="2">
    <location>
        <begin position="90"/>
        <end position="112"/>
    </location>
</feature>
<feature type="compositionally biased region" description="Polar residues" evidence="2">
    <location>
        <begin position="138"/>
        <end position="147"/>
    </location>
</feature>
<feature type="compositionally biased region" description="Polar residues" evidence="2">
    <location>
        <begin position="159"/>
        <end position="171"/>
    </location>
</feature>
<organism>
    <name type="scientific">Caenorhabditis elegans</name>
    <dbReference type="NCBI Taxonomy" id="6239"/>
    <lineage>
        <taxon>Eukaryota</taxon>
        <taxon>Metazoa</taxon>
        <taxon>Ecdysozoa</taxon>
        <taxon>Nematoda</taxon>
        <taxon>Chromadorea</taxon>
        <taxon>Rhabditida</taxon>
        <taxon>Rhabditina</taxon>
        <taxon>Rhabditomorpha</taxon>
        <taxon>Rhabditoidea</taxon>
        <taxon>Rhabditidae</taxon>
        <taxon>Peloderinae</taxon>
        <taxon>Caenorhabditis</taxon>
    </lineage>
</organism>
<evidence type="ECO:0000255" key="1">
    <source>
        <dbReference type="PROSITE-ProRule" id="PRU00407"/>
    </source>
</evidence>
<evidence type="ECO:0000256" key="2">
    <source>
        <dbReference type="SAM" id="MobiDB-lite"/>
    </source>
</evidence>
<evidence type="ECO:0000305" key="3"/>
<sequence>MVPMNPELMHYPNQPHMMPGYPMINAYQQSYLQNPAQWTPEMLLCMQMQMQQMVPGTATNSTYMPPQSKNTVTPNATSPLSQISDRDSGNDTISPPLTSQNSATTPNYHNQPQMQLTPLQQAKPEKEEISPYAINNILSSTQSSPDNGNEADDKENSSVRRNTFPASSASTKKPRGTPYDRTNTPMTVVPQMPQFAPDFSNYNLTMNAWSEFFKKDRCMVCGDNSTGYHYGVQSCEGCKGFFRRSVHKNIAYVCTKGENCTFSYENCAANRGVRTRCQACRFAKCLAVGMNRDNVRVNKETDKDVKPSVASPNFEMTSQVKELTAAFVANMPCSTHLTSGTHAIGAIKKFIESVPALSSLLPKDEKALEMSIQKVMSGILAIRAAFTFDPITFYSCENPVNLLRGGIRNTVFNDCEVALLSGIHILQIVNGGVAEIFTSYCQGLRHQLSQTHLQEIGLCDRLLMRLGPYLNQ</sequence>
<reference key="1">
    <citation type="journal article" date="1999" name="Genome Res.">
        <title>The nuclear receptor superfamily has undergone extensive proliferation and diversification in nematodes.</title>
        <authorList>
            <person name="Sluder A.E."/>
            <person name="Mathews S.W."/>
            <person name="Hough D."/>
            <person name="Yin V.P."/>
            <person name="Maina C.V."/>
        </authorList>
    </citation>
    <scope>NUCLEOTIDE SEQUENCE [GENOMIC DNA]</scope>
    <source>
        <strain>Bristol N2</strain>
    </source>
</reference>
<reference key="2">
    <citation type="journal article" date="1998" name="Science">
        <title>Genome sequence of the nematode C. elegans: a platform for investigating biology.</title>
        <authorList>
            <consortium name="The C. elegans sequencing consortium"/>
        </authorList>
    </citation>
    <scope>NUCLEOTIDE SEQUENCE [LARGE SCALE GENOMIC DNA]</scope>
    <source>
        <strain>Bristol N2</strain>
    </source>
</reference>
<accession>Q10902</accession>
<keyword id="KW-0238">DNA-binding</keyword>
<keyword id="KW-0479">Metal-binding</keyword>
<keyword id="KW-0539">Nucleus</keyword>
<keyword id="KW-0675">Receptor</keyword>
<keyword id="KW-1185">Reference proteome</keyword>
<keyword id="KW-0804">Transcription</keyword>
<keyword id="KW-0805">Transcription regulation</keyword>
<keyword id="KW-0862">Zinc</keyword>
<keyword id="KW-0863">Zinc-finger</keyword>
<name>NHR2_CAEEL</name>
<comment type="function">
    <text>Orphan nuclear receptor.</text>
</comment>
<comment type="subcellular location">
    <subcellularLocation>
        <location evidence="1">Nucleus</location>
    </subcellularLocation>
</comment>
<comment type="similarity">
    <text evidence="3">Belongs to the nuclear hormone receptor family.</text>
</comment>
<comment type="sequence caution" evidence="3">
    <conflict type="erroneous gene model prediction">
        <sequence resource="EMBL-CDS" id="AAA80355"/>
    </conflict>
</comment>
<protein>
    <recommendedName>
        <fullName>Nuclear hormone receptor family member nhr-2</fullName>
    </recommendedName>
</protein>